<keyword id="KW-0150">Chloroplast</keyword>
<keyword id="KW-0934">Plastid</keyword>
<keyword id="KW-1185">Reference proteome</keyword>
<keyword id="KW-0687">Ribonucleoprotein</keyword>
<keyword id="KW-0689">Ribosomal protein</keyword>
<dbReference type="EMBL" id="EF115542">
    <property type="protein sequence ID" value="ABK79537.1"/>
    <property type="molecule type" value="Genomic_DNA"/>
</dbReference>
<dbReference type="EMBL" id="EF115542">
    <property type="protein sequence ID" value="ABK79558.1"/>
    <property type="molecule type" value="Genomic_DNA"/>
</dbReference>
<dbReference type="SMR" id="A1E9W6"/>
<dbReference type="FunCoup" id="A1E9W6">
    <property type="interactions" value="314"/>
</dbReference>
<dbReference type="STRING" id="4558.A1E9W6"/>
<dbReference type="KEGG" id="sbi:4549094"/>
<dbReference type="KEGG" id="sbi:4549142"/>
<dbReference type="eggNOG" id="KOG0438">
    <property type="taxonomic scope" value="Eukaryota"/>
</dbReference>
<dbReference type="InParanoid" id="A1E9W6"/>
<dbReference type="OrthoDB" id="780906at2759"/>
<dbReference type="Proteomes" id="UP000000768">
    <property type="component" value="Chloroplast"/>
</dbReference>
<dbReference type="ExpressionAtlas" id="A1E9W6">
    <property type="expression patterns" value="baseline and differential"/>
</dbReference>
<dbReference type="GO" id="GO:0009507">
    <property type="term" value="C:chloroplast"/>
    <property type="evidence" value="ECO:0007669"/>
    <property type="project" value="UniProtKB-SubCell"/>
</dbReference>
<dbReference type="GO" id="GO:0005762">
    <property type="term" value="C:mitochondrial large ribosomal subunit"/>
    <property type="evidence" value="ECO:0000318"/>
    <property type="project" value="GO_Central"/>
</dbReference>
<dbReference type="GO" id="GO:0003723">
    <property type="term" value="F:RNA binding"/>
    <property type="evidence" value="ECO:0000318"/>
    <property type="project" value="GO_Central"/>
</dbReference>
<dbReference type="GO" id="GO:0019843">
    <property type="term" value="F:rRNA binding"/>
    <property type="evidence" value="ECO:0007669"/>
    <property type="project" value="UniProtKB-UniRule"/>
</dbReference>
<dbReference type="GO" id="GO:0003735">
    <property type="term" value="F:structural constituent of ribosome"/>
    <property type="evidence" value="ECO:0000318"/>
    <property type="project" value="GO_Central"/>
</dbReference>
<dbReference type="GO" id="GO:0016740">
    <property type="term" value="F:transferase activity"/>
    <property type="evidence" value="ECO:0007669"/>
    <property type="project" value="InterPro"/>
</dbReference>
<dbReference type="GO" id="GO:0032543">
    <property type="term" value="P:mitochondrial translation"/>
    <property type="evidence" value="ECO:0000318"/>
    <property type="project" value="GO_Central"/>
</dbReference>
<dbReference type="FunFam" id="4.10.950.10:FF:000001">
    <property type="entry name" value="50S ribosomal protein L2"/>
    <property type="match status" value="1"/>
</dbReference>
<dbReference type="FunFam" id="2.30.30.30:FF:000008">
    <property type="entry name" value="50S ribosomal protein L2, chloroplastic"/>
    <property type="match status" value="1"/>
</dbReference>
<dbReference type="FunFam" id="2.40.50.140:FF:000029">
    <property type="entry name" value="50S ribosomal protein L2, chloroplastic"/>
    <property type="match status" value="1"/>
</dbReference>
<dbReference type="Gene3D" id="2.30.30.30">
    <property type="match status" value="1"/>
</dbReference>
<dbReference type="Gene3D" id="2.40.50.140">
    <property type="entry name" value="Nucleic acid-binding proteins"/>
    <property type="match status" value="1"/>
</dbReference>
<dbReference type="Gene3D" id="4.10.950.10">
    <property type="entry name" value="Ribosomal protein L2, domain 3"/>
    <property type="match status" value="1"/>
</dbReference>
<dbReference type="HAMAP" id="MF_01320_B">
    <property type="entry name" value="Ribosomal_uL2_B"/>
    <property type="match status" value="1"/>
</dbReference>
<dbReference type="InterPro" id="IPR012340">
    <property type="entry name" value="NA-bd_OB-fold"/>
</dbReference>
<dbReference type="InterPro" id="IPR014722">
    <property type="entry name" value="Rib_uL2_dom2"/>
</dbReference>
<dbReference type="InterPro" id="IPR002171">
    <property type="entry name" value="Ribosomal_uL2"/>
</dbReference>
<dbReference type="InterPro" id="IPR005880">
    <property type="entry name" value="Ribosomal_uL2_bac/org-type"/>
</dbReference>
<dbReference type="InterPro" id="IPR022669">
    <property type="entry name" value="Ribosomal_uL2_C"/>
</dbReference>
<dbReference type="InterPro" id="IPR022671">
    <property type="entry name" value="Ribosomal_uL2_CS"/>
</dbReference>
<dbReference type="InterPro" id="IPR014726">
    <property type="entry name" value="Ribosomal_uL2_dom3"/>
</dbReference>
<dbReference type="InterPro" id="IPR022666">
    <property type="entry name" value="Ribosomal_uL2_RNA-bd_dom"/>
</dbReference>
<dbReference type="InterPro" id="IPR008991">
    <property type="entry name" value="Translation_prot_SH3-like_sf"/>
</dbReference>
<dbReference type="NCBIfam" id="TIGR01171">
    <property type="entry name" value="rplB_bact"/>
    <property type="match status" value="1"/>
</dbReference>
<dbReference type="PANTHER" id="PTHR13691:SF57">
    <property type="entry name" value="LARGE RIBOSOMAL SUBUNIT PROTEIN UL2CZ_UL2CY"/>
    <property type="match status" value="1"/>
</dbReference>
<dbReference type="PANTHER" id="PTHR13691">
    <property type="entry name" value="RIBOSOMAL PROTEIN L2"/>
    <property type="match status" value="1"/>
</dbReference>
<dbReference type="Pfam" id="PF00181">
    <property type="entry name" value="Ribosomal_L2"/>
    <property type="match status" value="1"/>
</dbReference>
<dbReference type="Pfam" id="PF03947">
    <property type="entry name" value="Ribosomal_L2_C"/>
    <property type="match status" value="1"/>
</dbReference>
<dbReference type="PIRSF" id="PIRSF002158">
    <property type="entry name" value="Ribosomal_L2"/>
    <property type="match status" value="1"/>
</dbReference>
<dbReference type="SMART" id="SM01383">
    <property type="entry name" value="Ribosomal_L2"/>
    <property type="match status" value="1"/>
</dbReference>
<dbReference type="SMART" id="SM01382">
    <property type="entry name" value="Ribosomal_L2_C"/>
    <property type="match status" value="1"/>
</dbReference>
<dbReference type="SUPFAM" id="SSF50249">
    <property type="entry name" value="Nucleic acid-binding proteins"/>
    <property type="match status" value="1"/>
</dbReference>
<dbReference type="SUPFAM" id="SSF50104">
    <property type="entry name" value="Translation proteins SH3-like domain"/>
    <property type="match status" value="1"/>
</dbReference>
<dbReference type="PROSITE" id="PS00467">
    <property type="entry name" value="RIBOSOMAL_L2"/>
    <property type="match status" value="1"/>
</dbReference>
<geneLocation type="chloroplast"/>
<name>RK2_SORBI</name>
<organism>
    <name type="scientific">Sorghum bicolor</name>
    <name type="common">Sorghum</name>
    <name type="synonym">Sorghum vulgare</name>
    <dbReference type="NCBI Taxonomy" id="4558"/>
    <lineage>
        <taxon>Eukaryota</taxon>
        <taxon>Viridiplantae</taxon>
        <taxon>Streptophyta</taxon>
        <taxon>Embryophyta</taxon>
        <taxon>Tracheophyta</taxon>
        <taxon>Spermatophyta</taxon>
        <taxon>Magnoliopsida</taxon>
        <taxon>Liliopsida</taxon>
        <taxon>Poales</taxon>
        <taxon>Poaceae</taxon>
        <taxon>PACMAD clade</taxon>
        <taxon>Panicoideae</taxon>
        <taxon>Andropogonodae</taxon>
        <taxon>Andropogoneae</taxon>
        <taxon>Sorghinae</taxon>
        <taxon>Sorghum</taxon>
    </lineage>
</organism>
<protein>
    <recommendedName>
        <fullName evidence="2">Large ribosomal subunit protein uL2cz/uL2cy</fullName>
    </recommendedName>
    <alternativeName>
        <fullName evidence="4">50S ribosomal protein L2, chloroplastic</fullName>
    </alternativeName>
</protein>
<comment type="subunit">
    <text evidence="1">Part of the 50S ribosomal subunit.</text>
</comment>
<comment type="subcellular location">
    <subcellularLocation>
        <location>Plastid</location>
        <location>Chloroplast</location>
    </subcellularLocation>
</comment>
<comment type="similarity">
    <text evidence="4">Belongs to the universal ribosomal protein uL2 family.</text>
</comment>
<gene>
    <name type="primary">rpl2-A</name>
</gene>
<gene>
    <name type="primary">rpl2-B</name>
</gene>
<feature type="chain" id="PRO_0000277101" description="Large ribosomal subunit protein uL2cz/uL2cy">
    <location>
        <begin position="1"/>
        <end position="271"/>
    </location>
</feature>
<feature type="region of interest" description="Disordered" evidence="3">
    <location>
        <begin position="1"/>
        <end position="22"/>
    </location>
</feature>
<feature type="region of interest" description="Disordered" evidence="3">
    <location>
        <begin position="223"/>
        <end position="271"/>
    </location>
</feature>
<reference key="1">
    <citation type="journal article" date="2007" name="Theor. Appl. Genet.">
        <title>Complete chloroplast genome sequences of Hordeum vulgare, Sorghum bicolor and Agrostis stolonifera, and comparative analyses with other grass genomes.</title>
        <authorList>
            <person name="Saski C."/>
            <person name="Lee S.-B."/>
            <person name="Fjellheim S."/>
            <person name="Guda C."/>
            <person name="Jansen R.K."/>
            <person name="Luo H."/>
            <person name="Tomkins J."/>
            <person name="Rognli O.A."/>
            <person name="Daniell H."/>
            <person name="Clarke J.L."/>
        </authorList>
    </citation>
    <scope>NUCLEOTIDE SEQUENCE [LARGE SCALE GENOMIC DNA]</scope>
    <source>
        <strain>cv. BTx623</strain>
    </source>
</reference>
<proteinExistence type="inferred from homology"/>
<evidence type="ECO:0000250" key="1"/>
<evidence type="ECO:0000255" key="2">
    <source>
        <dbReference type="HAMAP-Rule" id="MF_01320"/>
    </source>
</evidence>
<evidence type="ECO:0000256" key="3">
    <source>
        <dbReference type="SAM" id="MobiDB-lite"/>
    </source>
</evidence>
<evidence type="ECO:0000305" key="4"/>
<sequence>MAKHLYKTPIPSTRKGTVDRQVKSNPRNKLIHGRHRCGKGRNARGIITARHRGGGHKRLYRKIDFRRNQKDISGRIVTIEYDPNRNAYICLIHYGDGEKRYILHPRGAIIGDTIVSGTKVPISMGNALTDMPLGTAIHNIEITRGRGGQLARAAGAVAKLIAKEGKLATLRLPSGEVRLVSQNCLATVGQVGNVGVNQKSLGRAGSKCWLGKRPVVRGVVMNPVDHPHGGGEGKAPIGRKKPTTPWGYPALGRRTRKRKKYSDSFILRRRK</sequence>
<accession>A1E9W6</accession>